<keyword id="KW-0251">Elongation factor</keyword>
<keyword id="KW-0597">Phosphoprotein</keyword>
<keyword id="KW-0648">Protein biosynthesis</keyword>
<keyword id="KW-1185">Reference proteome</keyword>
<organism>
    <name type="scientific">Xenopus tropicalis</name>
    <name type="common">Western clawed frog</name>
    <name type="synonym">Silurana tropicalis</name>
    <dbReference type="NCBI Taxonomy" id="8364"/>
    <lineage>
        <taxon>Eukaryota</taxon>
        <taxon>Metazoa</taxon>
        <taxon>Chordata</taxon>
        <taxon>Craniata</taxon>
        <taxon>Vertebrata</taxon>
        <taxon>Euteleostomi</taxon>
        <taxon>Amphibia</taxon>
        <taxon>Batrachia</taxon>
        <taxon>Anura</taxon>
        <taxon>Pipoidea</taxon>
        <taxon>Pipidae</taxon>
        <taxon>Xenopodinae</taxon>
        <taxon>Xenopus</taxon>
        <taxon>Silurana</taxon>
    </lineage>
</organism>
<feature type="initiator methionine" description="Removed" evidence="1">
    <location>
        <position position="1"/>
    </location>
</feature>
<feature type="chain" id="PRO_0000155027" description="Elongation factor 1-beta">
    <location>
        <begin position="2"/>
        <end position="228"/>
    </location>
</feature>
<feature type="domain" description="GST C-terminal">
    <location>
        <begin position="2"/>
        <end position="90"/>
    </location>
</feature>
<feature type="region of interest" description="Disordered" evidence="5">
    <location>
        <begin position="70"/>
        <end position="122"/>
    </location>
</feature>
<feature type="compositionally biased region" description="Acidic residues" evidence="5">
    <location>
        <begin position="97"/>
        <end position="116"/>
    </location>
</feature>
<feature type="modified residue" description="Phosphoserine; by CK2" evidence="1">
    <location>
        <position position="109"/>
    </location>
</feature>
<sequence>MGFGDLKSPAGLKVLNEFLADKSYIEGYVPSQADVAVFDALSGAPPADLFHALRWYNHIKSYEKQKSSLPGVKKPLGNYGPVNIEDTTGSTAKDTKEEDDDDDIDLFGSDDEEENEESKRVREERLAQYEAKKSKKPALIAKSSILLDVKPWDDETDMAKLEECVRSIQMEGLVWGASKLVPVGYGIKKLQIQCVVEDDKVGTDVLEENITAFEDFVQSMDVAAFNKI</sequence>
<protein>
    <recommendedName>
        <fullName>Elongation factor 1-beta</fullName>
        <shortName>EF-1-beta</shortName>
    </recommendedName>
</protein>
<dbReference type="EMBL" id="BC077005">
    <property type="protein sequence ID" value="AAH77005.1"/>
    <property type="molecule type" value="mRNA"/>
</dbReference>
<dbReference type="RefSeq" id="NP_001006877.1">
    <property type="nucleotide sequence ID" value="NM_001006876.2"/>
</dbReference>
<dbReference type="SMR" id="Q6DET9"/>
<dbReference type="FunCoup" id="Q6DET9">
    <property type="interactions" value="2759"/>
</dbReference>
<dbReference type="STRING" id="8364.ENSXETP00000052826"/>
<dbReference type="PaxDb" id="8364-ENSXETP00000022275"/>
<dbReference type="DNASU" id="448658"/>
<dbReference type="GeneID" id="448658"/>
<dbReference type="KEGG" id="xtr:448658"/>
<dbReference type="AGR" id="Xenbase:XB-GENE-966955"/>
<dbReference type="CTD" id="1933"/>
<dbReference type="Xenbase" id="XB-GENE-966955">
    <property type="gene designation" value="eef1b2"/>
</dbReference>
<dbReference type="eggNOG" id="KOG1668">
    <property type="taxonomic scope" value="Eukaryota"/>
</dbReference>
<dbReference type="InParanoid" id="Q6DET9"/>
<dbReference type="OMA" id="YRWYKHI"/>
<dbReference type="OrthoDB" id="331763at2759"/>
<dbReference type="Proteomes" id="UP000008143">
    <property type="component" value="Chromosome 9"/>
</dbReference>
<dbReference type="Bgee" id="ENSXETG00000010098">
    <property type="expression patterns" value="Expressed in ovary and 27 other cell types or tissues"/>
</dbReference>
<dbReference type="GO" id="GO:0005853">
    <property type="term" value="C:eukaryotic translation elongation factor 1 complex"/>
    <property type="evidence" value="ECO:0007669"/>
    <property type="project" value="InterPro"/>
</dbReference>
<dbReference type="GO" id="GO:0003746">
    <property type="term" value="F:translation elongation factor activity"/>
    <property type="evidence" value="ECO:0007669"/>
    <property type="project" value="UniProtKB-KW"/>
</dbReference>
<dbReference type="CDD" id="cd00292">
    <property type="entry name" value="EF1B"/>
    <property type="match status" value="1"/>
</dbReference>
<dbReference type="CDD" id="cd10308">
    <property type="entry name" value="GST_C_eEF1b_like"/>
    <property type="match status" value="1"/>
</dbReference>
<dbReference type="FunFam" id="3.30.70.60:FF:000001">
    <property type="entry name" value="Elongation factor 1-beta 1 like"/>
    <property type="match status" value="1"/>
</dbReference>
<dbReference type="FunFam" id="1.20.1050.130:FF:000001">
    <property type="entry name" value="Putative Elongation factor 1-beta"/>
    <property type="match status" value="1"/>
</dbReference>
<dbReference type="Gene3D" id="1.20.1050.130">
    <property type="match status" value="1"/>
</dbReference>
<dbReference type="Gene3D" id="3.30.70.60">
    <property type="match status" value="1"/>
</dbReference>
<dbReference type="InterPro" id="IPR036219">
    <property type="entry name" value="eEF-1beta-like_sf"/>
</dbReference>
<dbReference type="InterPro" id="IPR018940">
    <property type="entry name" value="EF-1_beta_acid_region_euk"/>
</dbReference>
<dbReference type="InterPro" id="IPR049720">
    <property type="entry name" value="EF1B_bsu/dsu"/>
</dbReference>
<dbReference type="InterPro" id="IPR014038">
    <property type="entry name" value="EF1B_bsu/dsu_GNE"/>
</dbReference>
<dbReference type="InterPro" id="IPR036282">
    <property type="entry name" value="Glutathione-S-Trfase_C_sf"/>
</dbReference>
<dbReference type="InterPro" id="IPR014717">
    <property type="entry name" value="Transl_elong_EF1B/ribsomal_bS6"/>
</dbReference>
<dbReference type="InterPro" id="IPR001326">
    <property type="entry name" value="Transl_elong_EF1B_B/D_CS"/>
</dbReference>
<dbReference type="PANTHER" id="PTHR11595">
    <property type="entry name" value="EF-HAND AND COILED-COIL DOMAIN-CONTAINING FAMILY MEMBER"/>
    <property type="match status" value="1"/>
</dbReference>
<dbReference type="PANTHER" id="PTHR11595:SF21">
    <property type="entry name" value="ELONGATION FACTOR 1-BETA"/>
    <property type="match status" value="1"/>
</dbReference>
<dbReference type="Pfam" id="PF10587">
    <property type="entry name" value="EF-1_beta_acid"/>
    <property type="match status" value="1"/>
</dbReference>
<dbReference type="Pfam" id="PF00736">
    <property type="entry name" value="EF1_GNE"/>
    <property type="match status" value="1"/>
</dbReference>
<dbReference type="SMART" id="SM01182">
    <property type="entry name" value="EF-1_beta_acid"/>
    <property type="match status" value="1"/>
</dbReference>
<dbReference type="SMART" id="SM00888">
    <property type="entry name" value="EF1_GNE"/>
    <property type="match status" value="1"/>
</dbReference>
<dbReference type="SUPFAM" id="SSF54984">
    <property type="entry name" value="eEF-1beta-like"/>
    <property type="match status" value="1"/>
</dbReference>
<dbReference type="SUPFAM" id="SSF47616">
    <property type="entry name" value="GST C-terminal domain-like"/>
    <property type="match status" value="1"/>
</dbReference>
<dbReference type="PROSITE" id="PS00824">
    <property type="entry name" value="EF1BD_1"/>
    <property type="match status" value="1"/>
</dbReference>
<dbReference type="PROSITE" id="PS00825">
    <property type="entry name" value="EF1BD_2"/>
    <property type="match status" value="1"/>
</dbReference>
<accession>Q6DET9</accession>
<name>EF1B_XENTR</name>
<reference key="1">
    <citation type="submission" date="2004-07" db="EMBL/GenBank/DDBJ databases">
        <authorList>
            <consortium name="NIH - Xenopus Gene Collection (XGC) project"/>
        </authorList>
    </citation>
    <scope>NUCLEOTIDE SEQUENCE [LARGE SCALE MRNA]</scope>
    <source>
        <tissue>Embryo</tissue>
    </source>
</reference>
<comment type="function">
    <text evidence="4">Catalytic subunit of the guanine nucleotide exchange factor (GEF) (eEF1B subcomplex) of the eukaryotic elongation factor 1 complex (eEF1). Stimulates the exchange of GDP for GTP on elongation factor 1A (eEF1A), probably by displacing GDP from the nucleotide binding pocket in eEF1A.</text>
</comment>
<comment type="subunit">
    <text evidence="2 3">EF-1 is composed of 4 subunits: alpha, beta (alpha subunit of the eEF1B subcomplex), delta (beta subunit of the eEF1B subcomplex), and gamma (gamma subunit of the eEF1B subcomplex) (By similarity). Interacts with elongation factor EEF1A1 (By similarity).</text>
</comment>
<comment type="PTM">
    <text evidence="1">Phosphorylation affects the GDP/GTP exchange rate.</text>
</comment>
<comment type="similarity">
    <text evidence="6">Belongs to the EF-1-beta/EF-1-delta family.</text>
</comment>
<proteinExistence type="evidence at transcript level"/>
<evidence type="ECO:0000250" key="1"/>
<evidence type="ECO:0000250" key="2">
    <source>
        <dbReference type="UniProtKB" id="A6IPG1"/>
    </source>
</evidence>
<evidence type="ECO:0000250" key="3">
    <source>
        <dbReference type="UniProtKB" id="O70251"/>
    </source>
</evidence>
<evidence type="ECO:0000250" key="4">
    <source>
        <dbReference type="UniProtKB" id="P32471"/>
    </source>
</evidence>
<evidence type="ECO:0000256" key="5">
    <source>
        <dbReference type="SAM" id="MobiDB-lite"/>
    </source>
</evidence>
<evidence type="ECO:0000305" key="6"/>
<gene>
    <name type="primary">eef1b</name>
</gene>